<proteinExistence type="inferred from homology"/>
<evidence type="ECO:0000255" key="1">
    <source>
        <dbReference type="HAMAP-Rule" id="MF_00289"/>
    </source>
</evidence>
<evidence type="ECO:0000305" key="2"/>
<dbReference type="EMBL" id="CP001738">
    <property type="protein sequence ID" value="ACY97878.1"/>
    <property type="status" value="ALT_INIT"/>
    <property type="molecule type" value="Genomic_DNA"/>
</dbReference>
<dbReference type="RefSeq" id="WP_012852662.1">
    <property type="nucleotide sequence ID" value="NC_013510.1"/>
</dbReference>
<dbReference type="SMR" id="D1A2T0"/>
<dbReference type="STRING" id="471852.Tcur_2312"/>
<dbReference type="MEROPS" id="T01.980"/>
<dbReference type="KEGG" id="tcu:Tcur_2312"/>
<dbReference type="eggNOG" id="COG0638">
    <property type="taxonomic scope" value="Bacteria"/>
</dbReference>
<dbReference type="HOGENOM" id="CLU_071031_0_0_11"/>
<dbReference type="OrthoDB" id="9775643at2"/>
<dbReference type="UniPathway" id="UPA00997"/>
<dbReference type="Proteomes" id="UP000001918">
    <property type="component" value="Chromosome"/>
</dbReference>
<dbReference type="GO" id="GO:0005737">
    <property type="term" value="C:cytoplasm"/>
    <property type="evidence" value="ECO:0007669"/>
    <property type="project" value="UniProtKB-SubCell"/>
</dbReference>
<dbReference type="GO" id="GO:0019773">
    <property type="term" value="C:proteasome core complex, alpha-subunit complex"/>
    <property type="evidence" value="ECO:0007669"/>
    <property type="project" value="UniProtKB-UniRule"/>
</dbReference>
<dbReference type="GO" id="GO:0004298">
    <property type="term" value="F:threonine-type endopeptidase activity"/>
    <property type="evidence" value="ECO:0007669"/>
    <property type="project" value="InterPro"/>
</dbReference>
<dbReference type="GO" id="GO:0019941">
    <property type="term" value="P:modification-dependent protein catabolic process"/>
    <property type="evidence" value="ECO:0007669"/>
    <property type="project" value="UniProtKB-UniRule"/>
</dbReference>
<dbReference type="GO" id="GO:0010498">
    <property type="term" value="P:proteasomal protein catabolic process"/>
    <property type="evidence" value="ECO:0007669"/>
    <property type="project" value="UniProtKB-UniRule"/>
</dbReference>
<dbReference type="CDD" id="cd01906">
    <property type="entry name" value="proteasome_protease_HslV"/>
    <property type="match status" value="1"/>
</dbReference>
<dbReference type="Gene3D" id="3.60.20.10">
    <property type="entry name" value="Glutamine Phosphoribosylpyrophosphate, subunit 1, domain 1"/>
    <property type="match status" value="1"/>
</dbReference>
<dbReference type="HAMAP" id="MF_00289_B">
    <property type="entry name" value="Proteasome_A_B"/>
    <property type="match status" value="1"/>
</dbReference>
<dbReference type="InterPro" id="IPR029055">
    <property type="entry name" value="Ntn_hydrolases_N"/>
</dbReference>
<dbReference type="InterPro" id="IPR050115">
    <property type="entry name" value="Proteasome_alpha"/>
</dbReference>
<dbReference type="InterPro" id="IPR023332">
    <property type="entry name" value="Proteasome_alpha-type"/>
</dbReference>
<dbReference type="InterPro" id="IPR022296">
    <property type="entry name" value="Proteasome_asu_bac"/>
</dbReference>
<dbReference type="InterPro" id="IPR001353">
    <property type="entry name" value="Proteasome_sua/b"/>
</dbReference>
<dbReference type="NCBIfam" id="TIGR03691">
    <property type="entry name" value="20S_bact_alpha"/>
    <property type="match status" value="1"/>
</dbReference>
<dbReference type="PANTHER" id="PTHR11599">
    <property type="entry name" value="PROTEASOME SUBUNIT ALPHA/BETA"/>
    <property type="match status" value="1"/>
</dbReference>
<dbReference type="Pfam" id="PF00227">
    <property type="entry name" value="Proteasome"/>
    <property type="match status" value="1"/>
</dbReference>
<dbReference type="SUPFAM" id="SSF56235">
    <property type="entry name" value="N-terminal nucleophile aminohydrolases (Ntn hydrolases)"/>
    <property type="match status" value="1"/>
</dbReference>
<dbReference type="PROSITE" id="PS51475">
    <property type="entry name" value="PROTEASOME_ALPHA_2"/>
    <property type="match status" value="1"/>
</dbReference>
<accession>D1A2T0</accession>
<protein>
    <recommendedName>
        <fullName evidence="1">Proteasome subunit alpha</fullName>
    </recommendedName>
    <alternativeName>
        <fullName evidence="1">20S proteasome alpha subunit</fullName>
    </alternativeName>
    <alternativeName>
        <fullName evidence="1">Proteasome core protein PrcA</fullName>
    </alternativeName>
</protein>
<organism>
    <name type="scientific">Thermomonospora curvata (strain ATCC 19995 / DSM 43183 / JCM 3096 / KCTC 9072 / NBRC 15933 / NCIMB 10081 / Henssen B9)</name>
    <dbReference type="NCBI Taxonomy" id="471852"/>
    <lineage>
        <taxon>Bacteria</taxon>
        <taxon>Bacillati</taxon>
        <taxon>Actinomycetota</taxon>
        <taxon>Actinomycetes</taxon>
        <taxon>Streptosporangiales</taxon>
        <taxon>Thermomonosporaceae</taxon>
        <taxon>Thermomonospora</taxon>
    </lineage>
</organism>
<gene>
    <name evidence="1" type="primary">prcA</name>
    <name type="ordered locus">Tcur_2312</name>
</gene>
<keyword id="KW-0963">Cytoplasm</keyword>
<keyword id="KW-0647">Proteasome</keyword>
<keyword id="KW-1185">Reference proteome</keyword>
<name>PSA_THECD</name>
<feature type="chain" id="PRO_0000397181" description="Proteasome subunit alpha">
    <location>
        <begin position="1"/>
        <end position="230"/>
    </location>
</feature>
<reference key="1">
    <citation type="journal article" date="2011" name="Stand. Genomic Sci.">
        <title>Complete genome sequence of Thermomonospora curvata type strain (B9).</title>
        <authorList>
            <person name="Chertkov O."/>
            <person name="Sikorski J."/>
            <person name="Nolan M."/>
            <person name="Lapidus A."/>
            <person name="Lucas S."/>
            <person name="Del Rio T.G."/>
            <person name="Tice H."/>
            <person name="Cheng J.F."/>
            <person name="Goodwin L."/>
            <person name="Pitluck S."/>
            <person name="Liolios K."/>
            <person name="Ivanova N."/>
            <person name="Mavromatis K."/>
            <person name="Mikhailova N."/>
            <person name="Ovchinnikova G."/>
            <person name="Pati A."/>
            <person name="Chen A."/>
            <person name="Palaniappan K."/>
            <person name="Djao O.D."/>
            <person name="Land M."/>
            <person name="Hauser L."/>
            <person name="Chang Y.J."/>
            <person name="Jeffries C.D."/>
            <person name="Brettin T."/>
            <person name="Han C."/>
            <person name="Detter J.C."/>
            <person name="Rohde M."/>
            <person name="Goeker M."/>
            <person name="Woyke T."/>
            <person name="Bristow J."/>
            <person name="Eisen J.A."/>
            <person name="Markowitz V."/>
            <person name="Hugenholtz P."/>
            <person name="Klenk H.P."/>
            <person name="Kyrpides N.C."/>
        </authorList>
    </citation>
    <scope>NUCLEOTIDE SEQUENCE [LARGE SCALE GENOMIC DNA]</scope>
    <source>
        <strain>ATCC 19995 / DSM 43183 / JCM 3096 / KCTC 9072 / NBRC 15933 / NCIMB 10081 / Henssen B9</strain>
    </source>
</reference>
<comment type="function">
    <text evidence="1">Component of the proteasome core, a large protease complex with broad specificity involved in protein degradation.</text>
</comment>
<comment type="activity regulation">
    <text evidence="1">The formation of the proteasomal ATPase ARC-20S proteasome complex, likely via the docking of the C-termini of ARC into the intersubunit pockets in the alpha-rings, may trigger opening of the gate for substrate entry. Interconversion between the open-gate and close-gate conformations leads to a dynamic regulation of the 20S proteasome proteolysis activity.</text>
</comment>
<comment type="pathway">
    <text evidence="1">Protein degradation; proteasomal Pup-dependent pathway.</text>
</comment>
<comment type="subunit">
    <text evidence="1">The 20S proteasome core is composed of 14 alpha and 14 beta subunits that assemble into four stacked heptameric rings, resulting in a barrel-shaped structure. The two inner rings, each composed of seven catalytic beta subunits, are sandwiched by two outer rings, each composed of seven alpha subunits. The catalytic chamber with the active sites is on the inside of the barrel. Has a gated structure, the ends of the cylinder being occluded by the N-termini of the alpha-subunits. Is capped by the proteasome-associated ATPase, ARC.</text>
</comment>
<comment type="subcellular location">
    <subcellularLocation>
        <location evidence="1">Cytoplasm</location>
    </subcellularLocation>
</comment>
<comment type="similarity">
    <text evidence="1">Belongs to the peptidase T1A family.</text>
</comment>
<comment type="sequence caution" evidence="2">
    <conflict type="erroneous initiation">
        <sequence resource="EMBL-CDS" id="ACY97878"/>
    </conflict>
    <text>Truncated N-terminus.</text>
</comment>
<sequence>MTMPFYVPAEQQMKDKADYARKGIARGRSVVVLQYDDGILFVADNPSRALHKISEIYDRIAFAAVGKYNEFETLRLAGVRYADINGYQYDRRDVTARGLANAYAQTLGTIFTETAKPYEVELVVAEAGLDADSDQIYRLTFDGSVRDEHGYVAMGGQVDAVEQALKERFTEGMSLSAALRAGVQSLEAQESGRRLEAKALEVAVLDRNREHRLFRRLPAPRIEELLAEGA</sequence>